<gene>
    <name type="primary">US28</name>
</gene>
<sequence>MTPTTTTAELTTEFDYDEDATPCVFTDVLNQSKPVTLFLYGVVFLFGSIGNFLVIFTITWRRRIQCSGDVYFINLAAADLLFVCTLPLWMQYLLDHNSLASVPCTLLTACFYVAMFASLCFITEIALDRYYAIVYMRYRPVKQACLFSIFWWIFAVIIAIPHFMVVTKKDNQCMTDYDYLEVSYPIILNVELMLGAFVIPLSVISYCYYRISRIVAVSQSRHKGRIVRVLIAVVLVFIIFWLPYHLTLFVDTLKLLKWISSSCEFERSLKRALILTESLAFCHCCLNPLLYVFVGTKFRQELHCLLAEFRQRLFSRDVSWYHSMSFSRRGSPSRRETSSDTLSDEVCRVSQIIP</sequence>
<dbReference type="EMBL" id="AY446894">
    <property type="protein sequence ID" value="AAR31716.1"/>
    <property type="molecule type" value="Genomic_DNA"/>
</dbReference>
<dbReference type="RefSeq" id="YP_081612.1">
    <property type="nucleotide sequence ID" value="NC_006273.2"/>
</dbReference>
<dbReference type="SMR" id="F5HF62"/>
<dbReference type="GlyCosmos" id="F5HF62">
    <property type="glycosylation" value="1 site, No reported glycans"/>
</dbReference>
<dbReference type="DNASU" id="3077536"/>
<dbReference type="GeneID" id="3077536"/>
<dbReference type="KEGG" id="vg:3077536"/>
<dbReference type="Reactome" id="R-HSA-9609690">
    <property type="pathway name" value="HCMV Early Events"/>
</dbReference>
<dbReference type="Proteomes" id="UP000000938">
    <property type="component" value="Segment"/>
</dbReference>
<dbReference type="GO" id="GO:0020002">
    <property type="term" value="C:host cell plasma membrane"/>
    <property type="evidence" value="ECO:0007669"/>
    <property type="project" value="UniProtKB-SubCell"/>
</dbReference>
<dbReference type="GO" id="GO:0016020">
    <property type="term" value="C:membrane"/>
    <property type="evidence" value="ECO:0007669"/>
    <property type="project" value="UniProtKB-KW"/>
</dbReference>
<dbReference type="GO" id="GO:0019957">
    <property type="term" value="F:C-C chemokine binding"/>
    <property type="evidence" value="ECO:0007669"/>
    <property type="project" value="TreeGrafter"/>
</dbReference>
<dbReference type="GO" id="GO:0016493">
    <property type="term" value="F:C-C chemokine receptor activity"/>
    <property type="evidence" value="ECO:0007669"/>
    <property type="project" value="TreeGrafter"/>
</dbReference>
<dbReference type="GO" id="GO:0019722">
    <property type="term" value="P:calcium-mediated signaling"/>
    <property type="evidence" value="ECO:0007669"/>
    <property type="project" value="TreeGrafter"/>
</dbReference>
<dbReference type="GO" id="GO:0060326">
    <property type="term" value="P:cell chemotaxis"/>
    <property type="evidence" value="ECO:0007669"/>
    <property type="project" value="TreeGrafter"/>
</dbReference>
<dbReference type="GO" id="GO:0006955">
    <property type="term" value="P:immune response"/>
    <property type="evidence" value="ECO:0007669"/>
    <property type="project" value="TreeGrafter"/>
</dbReference>
<dbReference type="GO" id="GO:0007204">
    <property type="term" value="P:positive regulation of cytosolic calcium ion concentration"/>
    <property type="evidence" value="ECO:0007669"/>
    <property type="project" value="TreeGrafter"/>
</dbReference>
<dbReference type="CDD" id="cd14984">
    <property type="entry name" value="7tmA_Chemokine_R"/>
    <property type="match status" value="1"/>
</dbReference>
<dbReference type="Gene3D" id="1.20.1070.10">
    <property type="entry name" value="Rhodopsin 7-helix transmembrane proteins"/>
    <property type="match status" value="1"/>
</dbReference>
<dbReference type="InterPro" id="IPR050119">
    <property type="entry name" value="CCR1-9-like"/>
</dbReference>
<dbReference type="InterPro" id="IPR000355">
    <property type="entry name" value="Chemokine_rcpt"/>
</dbReference>
<dbReference type="InterPro" id="IPR000276">
    <property type="entry name" value="GPCR_Rhodpsn"/>
</dbReference>
<dbReference type="InterPro" id="IPR017452">
    <property type="entry name" value="GPCR_Rhodpsn_7TM"/>
</dbReference>
<dbReference type="PANTHER" id="PTHR10489">
    <property type="entry name" value="CELL ADHESION MOLECULE"/>
    <property type="match status" value="1"/>
</dbReference>
<dbReference type="PANTHER" id="PTHR10489:SF955">
    <property type="entry name" value="CX3C CHEMOKINE RECEPTOR 1"/>
    <property type="match status" value="1"/>
</dbReference>
<dbReference type="Pfam" id="PF00001">
    <property type="entry name" value="7tm_1"/>
    <property type="match status" value="1"/>
</dbReference>
<dbReference type="PRINTS" id="PR00657">
    <property type="entry name" value="CCCHEMOKINER"/>
</dbReference>
<dbReference type="PRINTS" id="PR00237">
    <property type="entry name" value="GPCRRHODOPSN"/>
</dbReference>
<dbReference type="SUPFAM" id="SSF81321">
    <property type="entry name" value="Family A G protein-coupled receptor-like"/>
    <property type="match status" value="1"/>
</dbReference>
<dbReference type="PROSITE" id="PS00237">
    <property type="entry name" value="G_PROTEIN_RECEP_F1_1"/>
    <property type="match status" value="1"/>
</dbReference>
<dbReference type="PROSITE" id="PS50262">
    <property type="entry name" value="G_PROTEIN_RECEP_F1_2"/>
    <property type="match status" value="1"/>
</dbReference>
<comment type="function">
    <text evidence="1">Receptor for a C-C type chemokine. Binds to a great number of different CC-chemokines including CCL5/RANTES, CCL2/MCP-1, CCL3/MIP-1-alpha as well as CX3CL1/Fractalkine. Transduces signals resulting in the activation of MAP kinase signaling pathways and augmentation of intracellular calcium ion levels, leading to alterations in chemotactic behavior of vascular smooth muscle cells and macrophages. The US28 receptor also exhibits high levels of agonist-independent signaling activity and agonist-independent endocytosis. Interacts with the host Gi complex without activating it, thereby probably interfering with the chemokine-Gi signaling. May also function as a G protein sink to sequester G protein from the cell surface via internalization. Interacts with endogenous Gaq/11 subunits and thereby constitutively activates phospholipase C.</text>
</comment>
<comment type="subunit">
    <text evidence="1">Interacts with host GPRASP1; this interaction targets US28 to lysosomes for degradation (By similarity). Interacts with host CX3CL1/Fractalkine (via N-terminus) (By similarity).</text>
</comment>
<comment type="subcellular location">
    <subcellularLocation>
        <location evidence="1">Host cell membrane</location>
        <topology evidence="1">Multi-pass membrane protein</topology>
    </subcellularLocation>
</comment>
<comment type="PTM">
    <text evidence="1">Phosphorylated. High phosphorylation occurs concomitantly with receptor endocytosis and correlate with low receptor presence at the plasma membrane.</text>
</comment>
<comment type="similarity">
    <text evidence="3">Belongs to the G-protein coupled receptor 1 family.</text>
</comment>
<name>US28_HCMVM</name>
<evidence type="ECO:0000250" key="1">
    <source>
        <dbReference type="UniProtKB" id="P69332"/>
    </source>
</evidence>
<evidence type="ECO:0000255" key="2"/>
<evidence type="ECO:0000255" key="3">
    <source>
        <dbReference type="PROSITE-ProRule" id="PRU00521"/>
    </source>
</evidence>
<organism>
    <name type="scientific">Human cytomegalovirus (strain Merlin)</name>
    <name type="common">HHV-5</name>
    <name type="synonym">Human herpesvirus 5</name>
    <dbReference type="NCBI Taxonomy" id="295027"/>
    <lineage>
        <taxon>Viruses</taxon>
        <taxon>Duplodnaviria</taxon>
        <taxon>Heunggongvirae</taxon>
        <taxon>Peploviricota</taxon>
        <taxon>Herviviricetes</taxon>
        <taxon>Herpesvirales</taxon>
        <taxon>Orthoherpesviridae</taxon>
        <taxon>Betaherpesvirinae</taxon>
        <taxon>Cytomegalovirus</taxon>
        <taxon>Cytomegalovirus humanbeta5</taxon>
        <taxon>Human cytomegalovirus</taxon>
    </lineage>
</organism>
<protein>
    <recommendedName>
        <fullName>Envelope protein US28</fullName>
    </recommendedName>
</protein>
<organismHost>
    <name type="scientific">Homo sapiens</name>
    <name type="common">Human</name>
    <dbReference type="NCBI Taxonomy" id="9606"/>
</organismHost>
<proteinExistence type="inferred from homology"/>
<feature type="chain" id="PRO_0000418264" description="Envelope protein US28">
    <location>
        <begin position="1"/>
        <end position="354"/>
    </location>
</feature>
<feature type="topological domain" description="Extracellular" evidence="2">
    <location>
        <begin position="1"/>
        <end position="37"/>
    </location>
</feature>
<feature type="transmembrane region" description="Helical" evidence="2">
    <location>
        <begin position="38"/>
        <end position="58"/>
    </location>
</feature>
<feature type="topological domain" description="Cytoplasmic" evidence="2">
    <location>
        <begin position="59"/>
        <end position="69"/>
    </location>
</feature>
<feature type="transmembrane region" description="Helical" evidence="2">
    <location>
        <begin position="70"/>
        <end position="90"/>
    </location>
</feature>
<feature type="topological domain" description="Extracellular" evidence="2">
    <location>
        <begin position="91"/>
        <end position="101"/>
    </location>
</feature>
<feature type="transmembrane region" description="Helical" evidence="2">
    <location>
        <begin position="102"/>
        <end position="122"/>
    </location>
</feature>
<feature type="topological domain" description="Cytoplasmic" evidence="2">
    <location>
        <begin position="123"/>
        <end position="145"/>
    </location>
</feature>
<feature type="transmembrane region" description="Helical" evidence="2">
    <location>
        <begin position="146"/>
        <end position="166"/>
    </location>
</feature>
<feature type="topological domain" description="Extracellular" evidence="2">
    <location>
        <begin position="167"/>
        <end position="183"/>
    </location>
</feature>
<feature type="transmembrane region" description="Helical" evidence="2">
    <location>
        <begin position="184"/>
        <end position="204"/>
    </location>
</feature>
<feature type="topological domain" description="Cytoplasmic" evidence="2">
    <location>
        <begin position="205"/>
        <end position="228"/>
    </location>
</feature>
<feature type="transmembrane region" description="Helical" evidence="2">
    <location>
        <begin position="229"/>
        <end position="249"/>
    </location>
</feature>
<feature type="topological domain" description="Extracellular" evidence="2">
    <location>
        <begin position="250"/>
        <end position="273"/>
    </location>
</feature>
<feature type="transmembrane region" description="Helical" evidence="2">
    <location>
        <begin position="274"/>
        <end position="294"/>
    </location>
</feature>
<feature type="topological domain" description="Cytoplasmic" evidence="2">
    <location>
        <begin position="295"/>
        <end position="354"/>
    </location>
</feature>
<feature type="glycosylation site" description="N-linked (GlcNAc...) asparagine; by host" evidence="2">
    <location>
        <position position="30"/>
    </location>
</feature>
<reference key="1">
    <citation type="journal article" date="2004" name="J. Gen. Virol.">
        <title>Genetic content of wild-type human cytomegalovirus.</title>
        <authorList>
            <person name="Dolan A."/>
            <person name="Cunningham C."/>
            <person name="Hector R.D."/>
            <person name="Hassan-Walker A.F."/>
            <person name="Lee L."/>
            <person name="Addison C."/>
            <person name="Dargan D.J."/>
            <person name="McGeoch D.J."/>
            <person name="Gatherer D."/>
            <person name="Emery V.C."/>
            <person name="Griffiths P.D."/>
            <person name="Sinzger C."/>
            <person name="McSharry B.P."/>
            <person name="Wilkinson G.W.G."/>
            <person name="Davison A.J."/>
        </authorList>
    </citation>
    <scope>NUCLEOTIDE SEQUENCE [LARGE SCALE GENOMIC DNA]</scope>
</reference>
<keyword id="KW-0297">G-protein coupled receptor</keyword>
<keyword id="KW-0325">Glycoprotein</keyword>
<keyword id="KW-1032">Host cell membrane</keyword>
<keyword id="KW-1043">Host membrane</keyword>
<keyword id="KW-0945">Host-virus interaction</keyword>
<keyword id="KW-1086">Inhibition of host chemokines by virus</keyword>
<keyword id="KW-0472">Membrane</keyword>
<keyword id="KW-0675">Receptor</keyword>
<keyword id="KW-1185">Reference proteome</keyword>
<keyword id="KW-0807">Transducer</keyword>
<keyword id="KW-0812">Transmembrane</keyword>
<keyword id="KW-1133">Transmembrane helix</keyword>
<keyword id="KW-0899">Viral immunoevasion</keyword>
<accession>F5HF62</accession>